<name>RPSC_MYXXA</name>
<gene>
    <name type="primary">sigC</name>
</gene>
<protein>
    <recommendedName>
        <fullName>RNA polymerase sigma-C factor</fullName>
    </recommendedName>
</protein>
<proteinExistence type="inferred from homology"/>
<reference key="1">
    <citation type="journal article" date="1993" name="J. Bacteriol.">
        <title>A new putative sigma factor of Myxococcus xanthus.</title>
        <authorList>
            <person name="Apelian D."/>
            <person name="Inouye S."/>
        </authorList>
    </citation>
    <scope>NUCLEOTIDE SEQUENCE [GENOMIC DNA]</scope>
    <source>
        <strain>FB / DZF1</strain>
    </source>
</reference>
<sequence>MQASNSFSSPDSLSTYLSEINQYPLLTQPQEQELSKRFRAGDLAAGHQLVTANLRFVVKVAYEYRSYGLKMSDLIQEANIGLMKAVQKFDPDKGIRLISYAVWWIRAYIQNCILKNWSLVKLGTTQAQRRLFFSLARTRRELEKMGAGDANVVNAEEIARKLNVKASEVREMEQRMGGRDLSLDAPMGEDGDATHLDFVESESVSAVDEVADRQQANLTRELVQRALRRLDPRERFIIEQRVMGDAEMTLSELGEHFGFSRERARQLEIRAKDKLKLALVTLMAEAGVDESTLNA</sequence>
<accession>Q07083</accession>
<organism>
    <name type="scientific">Myxococcus xanthus</name>
    <dbReference type="NCBI Taxonomy" id="34"/>
    <lineage>
        <taxon>Bacteria</taxon>
        <taxon>Pseudomonadati</taxon>
        <taxon>Myxococcota</taxon>
        <taxon>Myxococcia</taxon>
        <taxon>Myxococcales</taxon>
        <taxon>Cystobacterineae</taxon>
        <taxon>Myxococcaceae</taxon>
        <taxon>Myxococcus</taxon>
    </lineage>
</organism>
<feature type="chain" id="PRO_0000093968" description="RNA polymerase sigma-C factor">
    <location>
        <begin position="1"/>
        <end position="295"/>
    </location>
</feature>
<feature type="DNA-binding region" description="H-T-H motif" evidence="1">
    <location>
        <begin position="250"/>
        <end position="269"/>
    </location>
</feature>
<feature type="short sequence motif" description="Polymerase core binding">
    <location>
        <begin position="73"/>
        <end position="86"/>
    </location>
</feature>
<evidence type="ECO:0000250" key="1"/>
<evidence type="ECO:0000305" key="2"/>
<comment type="function">
    <text>Sigma factors are initiation factors that promote the attachment of RNA polymerase to specific initiation sites and are then released. This sigma factor is essential for normal fruiting body formation.</text>
</comment>
<comment type="similarity">
    <text evidence="2">Belongs to the sigma-70 factor family.</text>
</comment>
<dbReference type="EMBL" id="L12992">
    <property type="protein sequence ID" value="AAA25408.1"/>
    <property type="molecule type" value="Genomic_DNA"/>
</dbReference>
<dbReference type="PIR" id="A40587">
    <property type="entry name" value="A40587"/>
</dbReference>
<dbReference type="RefSeq" id="WP_011556153.1">
    <property type="nucleotide sequence ID" value="NZ_JABFNQ010000054.1"/>
</dbReference>
<dbReference type="SMR" id="Q07083"/>
<dbReference type="OMA" id="RVQREFN"/>
<dbReference type="GO" id="GO:0003677">
    <property type="term" value="F:DNA binding"/>
    <property type="evidence" value="ECO:0007669"/>
    <property type="project" value="UniProtKB-KW"/>
</dbReference>
<dbReference type="GO" id="GO:0016987">
    <property type="term" value="F:sigma factor activity"/>
    <property type="evidence" value="ECO:0007669"/>
    <property type="project" value="UniProtKB-KW"/>
</dbReference>
<dbReference type="GO" id="GO:0006352">
    <property type="term" value="P:DNA-templated transcription initiation"/>
    <property type="evidence" value="ECO:0007669"/>
    <property type="project" value="InterPro"/>
</dbReference>
<dbReference type="CDD" id="cd06171">
    <property type="entry name" value="Sigma70_r4"/>
    <property type="match status" value="1"/>
</dbReference>
<dbReference type="Gene3D" id="1.10.601.10">
    <property type="entry name" value="RNA Polymerase Primary Sigma Factor"/>
    <property type="match status" value="1"/>
</dbReference>
<dbReference type="Gene3D" id="1.10.10.10">
    <property type="entry name" value="Winged helix-like DNA-binding domain superfamily/Winged helix DNA-binding domain"/>
    <property type="match status" value="2"/>
</dbReference>
<dbReference type="InterPro" id="IPR014284">
    <property type="entry name" value="RNA_pol_sigma-70_dom"/>
</dbReference>
<dbReference type="InterPro" id="IPR000943">
    <property type="entry name" value="RNA_pol_sigma70"/>
</dbReference>
<dbReference type="InterPro" id="IPR009042">
    <property type="entry name" value="RNA_pol_sigma70_r1_2"/>
</dbReference>
<dbReference type="InterPro" id="IPR007627">
    <property type="entry name" value="RNA_pol_sigma70_r2"/>
</dbReference>
<dbReference type="InterPro" id="IPR007624">
    <property type="entry name" value="RNA_pol_sigma70_r3"/>
</dbReference>
<dbReference type="InterPro" id="IPR007630">
    <property type="entry name" value="RNA_pol_sigma70_r4"/>
</dbReference>
<dbReference type="InterPro" id="IPR013325">
    <property type="entry name" value="RNA_pol_sigma_r2"/>
</dbReference>
<dbReference type="InterPro" id="IPR013324">
    <property type="entry name" value="RNA_pol_sigma_r3/r4-like"/>
</dbReference>
<dbReference type="InterPro" id="IPR050813">
    <property type="entry name" value="Sigma-70_Factor"/>
</dbReference>
<dbReference type="InterPro" id="IPR036388">
    <property type="entry name" value="WH-like_DNA-bd_sf"/>
</dbReference>
<dbReference type="NCBIfam" id="NF005143">
    <property type="entry name" value="PRK06596.1"/>
    <property type="match status" value="1"/>
</dbReference>
<dbReference type="NCBIfam" id="TIGR02937">
    <property type="entry name" value="sigma70-ECF"/>
    <property type="match status" value="1"/>
</dbReference>
<dbReference type="PANTHER" id="PTHR30376:SF3">
    <property type="entry name" value="RNA POLYMERASE SIGMA FACTOR RPOH"/>
    <property type="match status" value="1"/>
</dbReference>
<dbReference type="PANTHER" id="PTHR30376">
    <property type="entry name" value="SIGMA FACTOR RPOH HEAT SHOCK RELATED"/>
    <property type="match status" value="1"/>
</dbReference>
<dbReference type="Pfam" id="PF00140">
    <property type="entry name" value="Sigma70_r1_2"/>
    <property type="match status" value="1"/>
</dbReference>
<dbReference type="Pfam" id="PF04542">
    <property type="entry name" value="Sigma70_r2"/>
    <property type="match status" value="1"/>
</dbReference>
<dbReference type="Pfam" id="PF04539">
    <property type="entry name" value="Sigma70_r3"/>
    <property type="match status" value="1"/>
</dbReference>
<dbReference type="Pfam" id="PF04545">
    <property type="entry name" value="Sigma70_r4"/>
    <property type="match status" value="1"/>
</dbReference>
<dbReference type="PIRSF" id="PIRSF000770">
    <property type="entry name" value="RNA_pol_sigma-SigE/K"/>
    <property type="match status" value="1"/>
</dbReference>
<dbReference type="PRINTS" id="PR00046">
    <property type="entry name" value="SIGMA70FCT"/>
</dbReference>
<dbReference type="SUPFAM" id="SSF88946">
    <property type="entry name" value="Sigma2 domain of RNA polymerase sigma factors"/>
    <property type="match status" value="1"/>
</dbReference>
<dbReference type="SUPFAM" id="SSF88659">
    <property type="entry name" value="Sigma3 and sigma4 domains of RNA polymerase sigma factors"/>
    <property type="match status" value="1"/>
</dbReference>
<dbReference type="PROSITE" id="PS00716">
    <property type="entry name" value="SIGMA70_2"/>
    <property type="match status" value="1"/>
</dbReference>
<keyword id="KW-0238">DNA-binding</keyword>
<keyword id="KW-0731">Sigma factor</keyword>
<keyword id="KW-0804">Transcription</keyword>
<keyword id="KW-0805">Transcription regulation</keyword>